<keyword id="KW-0131">Cell cycle</keyword>
<keyword id="KW-0132">Cell division</keyword>
<keyword id="KW-0159">Chromosome partition</keyword>
<keyword id="KW-0963">Cytoplasm</keyword>
<keyword id="KW-1185">Reference proteome</keyword>
<evidence type="ECO:0000255" key="1">
    <source>
        <dbReference type="HAMAP-Rule" id="MF_01805"/>
    </source>
</evidence>
<sequence>MNDNNNNNEFKPENLESLNNTEFHISIKDITGKEFNGPFELFYSLIKERKMDILNINLVEVIQLYVDYINNYLTKLKIDDLTEYLLMATYLLEQKSKRILPSMDTEEKISKDIERDKYIQRLLVYKQYQEIVPKLMEKLERRSRMFEKPTQSGEDKESLLKEFQDNSYVPAMDLDVILKAMQKVYLKLVTTKKTKSPKDNVKLIDVSEISIDDVEKEIREFLEPFPHLYKISFMDYFKNIPDEKFTKRYFVVAFVAILVLVRNGHIQLEQNSSDENIFIVKIDKEVESNEY</sequence>
<protein>
    <recommendedName>
        <fullName evidence="1">Segregation and condensation protein A</fullName>
    </recommendedName>
</protein>
<name>SCPA_MALP2</name>
<accession>Q8EX12</accession>
<reference key="1">
    <citation type="journal article" date="2002" name="Nucleic Acids Res.">
        <title>The complete genomic sequence of Mycoplasma penetrans, an intracellular bacterial pathogen in humans.</title>
        <authorList>
            <person name="Sasaki Y."/>
            <person name="Ishikawa J."/>
            <person name="Yamashita A."/>
            <person name="Oshima K."/>
            <person name="Kenri T."/>
            <person name="Furuya K."/>
            <person name="Yoshino C."/>
            <person name="Horino A."/>
            <person name="Shiba T."/>
            <person name="Sasaki T."/>
            <person name="Hattori M."/>
        </authorList>
    </citation>
    <scope>NUCLEOTIDE SEQUENCE [LARGE SCALE GENOMIC DNA]</scope>
    <source>
        <strain>HF-2</strain>
    </source>
</reference>
<proteinExistence type="inferred from homology"/>
<comment type="function">
    <text evidence="1">Participates in chromosomal partition during cell division. May act via the formation of a condensin-like complex containing Smc and ScpB that pull DNA away from mid-cell into both cell halves.</text>
</comment>
<comment type="subunit">
    <text evidence="1">Component of a cohesin-like complex composed of ScpA, ScpB and the Smc homodimer, in which ScpA and ScpB bind to the head domain of Smc. The presence of the three proteins is required for the association of the complex with DNA.</text>
</comment>
<comment type="subcellular location">
    <subcellularLocation>
        <location evidence="1">Cytoplasm</location>
    </subcellularLocation>
    <text evidence="1">Associated with two foci at the outer edges of the nucleoid region in young cells, and at four foci within both cell halves in older cells.</text>
</comment>
<comment type="similarity">
    <text evidence="1">Belongs to the ScpA family.</text>
</comment>
<organism>
    <name type="scientific">Malacoplasma penetrans (strain HF-2)</name>
    <name type="common">Mycoplasma penetrans</name>
    <dbReference type="NCBI Taxonomy" id="272633"/>
    <lineage>
        <taxon>Bacteria</taxon>
        <taxon>Bacillati</taxon>
        <taxon>Mycoplasmatota</taxon>
        <taxon>Mycoplasmoidales</taxon>
        <taxon>Mycoplasmoidaceae</taxon>
        <taxon>Malacoplasma</taxon>
    </lineage>
</organism>
<feature type="chain" id="PRO_0000211096" description="Segregation and condensation protein A">
    <location>
        <begin position="1"/>
        <end position="291"/>
    </location>
</feature>
<dbReference type="EMBL" id="BA000026">
    <property type="protein sequence ID" value="BAC43828.1"/>
    <property type="molecule type" value="Genomic_DNA"/>
</dbReference>
<dbReference type="RefSeq" id="WP_011076864.1">
    <property type="nucleotide sequence ID" value="NC_004432.1"/>
</dbReference>
<dbReference type="SMR" id="Q8EX12"/>
<dbReference type="FunCoup" id="Q8EX12">
    <property type="interactions" value="140"/>
</dbReference>
<dbReference type="STRING" id="272633.gene:10731129"/>
<dbReference type="KEGG" id="mpe:MYPE380"/>
<dbReference type="eggNOG" id="COG1354">
    <property type="taxonomic scope" value="Bacteria"/>
</dbReference>
<dbReference type="HOGENOM" id="CLU_038686_3_0_14"/>
<dbReference type="InParanoid" id="Q8EX12"/>
<dbReference type="Proteomes" id="UP000002522">
    <property type="component" value="Chromosome"/>
</dbReference>
<dbReference type="GO" id="GO:0005737">
    <property type="term" value="C:cytoplasm"/>
    <property type="evidence" value="ECO:0007669"/>
    <property type="project" value="UniProtKB-SubCell"/>
</dbReference>
<dbReference type="GO" id="GO:0051301">
    <property type="term" value="P:cell division"/>
    <property type="evidence" value="ECO:0007669"/>
    <property type="project" value="UniProtKB-KW"/>
</dbReference>
<dbReference type="GO" id="GO:0007059">
    <property type="term" value="P:chromosome segregation"/>
    <property type="evidence" value="ECO:0007669"/>
    <property type="project" value="UniProtKB-UniRule"/>
</dbReference>
<dbReference type="GO" id="GO:0006260">
    <property type="term" value="P:DNA replication"/>
    <property type="evidence" value="ECO:0007669"/>
    <property type="project" value="UniProtKB-UniRule"/>
</dbReference>
<dbReference type="Gene3D" id="6.10.250.2410">
    <property type="match status" value="1"/>
</dbReference>
<dbReference type="HAMAP" id="MF_01805">
    <property type="entry name" value="ScpA"/>
    <property type="match status" value="1"/>
</dbReference>
<dbReference type="InterPro" id="IPR003768">
    <property type="entry name" value="ScpA"/>
</dbReference>
<dbReference type="PANTHER" id="PTHR33969">
    <property type="entry name" value="SEGREGATION AND CONDENSATION PROTEIN A"/>
    <property type="match status" value="1"/>
</dbReference>
<dbReference type="PANTHER" id="PTHR33969:SF2">
    <property type="entry name" value="SEGREGATION AND CONDENSATION PROTEIN A"/>
    <property type="match status" value="1"/>
</dbReference>
<dbReference type="Pfam" id="PF02616">
    <property type="entry name" value="SMC_ScpA"/>
    <property type="match status" value="1"/>
</dbReference>
<gene>
    <name evidence="1" type="primary">scpA</name>
    <name type="ordered locus">MYPE380</name>
</gene>